<name>FAPD_PSEFL</name>
<accession>P0DXF6</accession>
<sequence length="226" mass="25281">MRRATLCLLLLLAGPSWAGQMAISAMPGGAVIFKKVESIRERRFANLVEQKTDFSCGAAALATILRQAYWLDVDEEHVIKGMLVNADQDLVRTQGFSMLDMKRYLESIGMRARGYKIGPDTLLTVKIPVVVLVEIRGYKHFVVMQRAEKDWVYIGDPVLGNKRLSRDDFLAGWNGIVFAVLGEGYDKANALLDPPTPLTAKTKMNEFRPVGDAELMDFGFIQSDFF</sequence>
<protein>
    <recommendedName>
        <fullName evidence="9">Probable functional amyloid protease FapD</fullName>
        <ecNumber evidence="2">3.4.22.-</ecNumber>
    </recommendedName>
    <alternativeName>
        <fullName evidence="9">Probable fibril-associated protease FapD</fullName>
    </alternativeName>
</protein>
<proteinExistence type="evidence at protein level"/>
<keyword id="KW-0067">ATP-binding</keyword>
<keyword id="KW-0903">Direct protein sequencing</keyword>
<keyword id="KW-0378">Hydrolase</keyword>
<keyword id="KW-0547">Nucleotide-binding</keyword>
<keyword id="KW-0574">Periplasm</keyword>
<keyword id="KW-0645">Protease</keyword>
<keyword id="KW-0732">Signal</keyword>
<keyword id="KW-0788">Thiol protease</keyword>
<feature type="signal peptide" evidence="6">
    <location>
        <begin position="1"/>
        <end position="18"/>
    </location>
</feature>
<feature type="chain" id="PRO_0000461516" description="Probable functional amyloid protease FapD" evidence="1">
    <location>
        <begin position="19"/>
        <end position="226"/>
    </location>
</feature>
<feature type="domain" description="Peptidase C39" evidence="2">
    <location>
        <begin position="50"/>
        <end position="180"/>
    </location>
</feature>
<feature type="active site" evidence="2">
    <location>
        <position position="56"/>
    </location>
</feature>
<feature type="mutagenesis site" description="The fapABCDEF operon longer secretes FapC." evidence="6">
    <original>C</original>
    <variation>A</variation>
    <location>
        <position position="56"/>
    </location>
</feature>
<organism>
    <name type="scientific">Pseudomonas fluorescens</name>
    <dbReference type="NCBI Taxonomy" id="294"/>
    <lineage>
        <taxon>Bacteria</taxon>
        <taxon>Pseudomonadati</taxon>
        <taxon>Pseudomonadota</taxon>
        <taxon>Gammaproteobacteria</taxon>
        <taxon>Pseudomonadales</taxon>
        <taxon>Pseudomonadaceae</taxon>
        <taxon>Pseudomonas</taxon>
    </lineage>
</organism>
<dbReference type="EC" id="3.4.22.-" evidence="2"/>
<dbReference type="EMBL" id="ACOQ01000001">
    <property type="protein sequence ID" value="EEP64552.1"/>
    <property type="status" value="ALT_INIT"/>
    <property type="molecule type" value="Genomic_DNA"/>
</dbReference>
<dbReference type="EMBL" id="CP008896">
    <property type="protein sequence ID" value="AIG01392.1"/>
    <property type="molecule type" value="Genomic_DNA"/>
</dbReference>
<dbReference type="RefSeq" id="WP_038447852.1">
    <property type="nucleotide sequence ID" value="NZ_CP008896.1"/>
</dbReference>
<dbReference type="SMR" id="P0DXF6"/>
<dbReference type="KEGG" id="pfn:HZ99_04095"/>
<dbReference type="GO" id="GO:0016020">
    <property type="term" value="C:membrane"/>
    <property type="evidence" value="ECO:0007669"/>
    <property type="project" value="InterPro"/>
</dbReference>
<dbReference type="GO" id="GO:0042597">
    <property type="term" value="C:periplasmic space"/>
    <property type="evidence" value="ECO:0007669"/>
    <property type="project" value="UniProtKB-SubCell"/>
</dbReference>
<dbReference type="GO" id="GO:0005524">
    <property type="term" value="F:ATP binding"/>
    <property type="evidence" value="ECO:0007669"/>
    <property type="project" value="UniProtKB-KW"/>
</dbReference>
<dbReference type="GO" id="GO:0008234">
    <property type="term" value="F:cysteine-type peptidase activity"/>
    <property type="evidence" value="ECO:0007669"/>
    <property type="project" value="UniProtKB-KW"/>
</dbReference>
<dbReference type="GO" id="GO:0006508">
    <property type="term" value="P:proteolysis"/>
    <property type="evidence" value="ECO:0007669"/>
    <property type="project" value="UniProtKB-KW"/>
</dbReference>
<dbReference type="CDD" id="cd02423">
    <property type="entry name" value="Peptidase_C39G"/>
    <property type="match status" value="1"/>
</dbReference>
<dbReference type="Gene3D" id="3.90.70.10">
    <property type="entry name" value="Cysteine proteinases"/>
    <property type="match status" value="1"/>
</dbReference>
<dbReference type="InterPro" id="IPR005074">
    <property type="entry name" value="Peptidase_C39"/>
</dbReference>
<dbReference type="Pfam" id="PF03412">
    <property type="entry name" value="Peptidase_C39"/>
    <property type="match status" value="1"/>
</dbReference>
<dbReference type="PROSITE" id="PS50990">
    <property type="entry name" value="PEPTIDASE_C39"/>
    <property type="match status" value="1"/>
</dbReference>
<reference key="1">
    <citation type="journal article" date="2010" name="Mol. Microbiol.">
        <title>Functional amyloid in Pseudomonas.</title>
        <authorList>
            <person name="Dueholm M.S."/>
            <person name="Petersen S.V."/>
            <person name="Soenderkaer M."/>
            <person name="Larsen P."/>
            <person name="Christiansen G."/>
            <person name="Hein K.L."/>
            <person name="Enghild J.J."/>
            <person name="Nielsen J.L."/>
            <person name="Nielsen K.L."/>
            <person name="Nielsen P.H."/>
            <person name="Otzen D.E."/>
        </authorList>
    </citation>
    <scope>NUCLEOTIDE SEQUENCE [GENOMIC DNA]</scope>
    <scope>FUNCTION</scope>
    <source>
        <strain>DSM 29051 / UK4</strain>
    </source>
</reference>
<reference key="2">
    <citation type="journal article" date="2014" name="Genome Announc.">
        <title>Complete Genome Sequence of Pseudomonas sp. UK4, a Model Organism for Studies of Functional Amyloids in Pseudomonas.</title>
        <authorList>
            <person name="Dueholm M.S."/>
            <person name="Danielsen H.N."/>
            <person name="Nielsen P.H."/>
        </authorList>
    </citation>
    <scope>NUCLEOTIDE SEQUENCE [LARGE SCALE GENOMIC DNA]</scope>
    <source>
        <strain>DSM 29051 / UK4</strain>
    </source>
</reference>
<reference key="3">
    <citation type="journal article" date="2017" name="Nat. Commun.">
        <title>A new class of hybrid secretion system is employed in Pseudomonas amyloid biogenesis.</title>
        <authorList>
            <person name="Rouse S.L."/>
            <person name="Hawthorne W.J."/>
            <person name="Berry J.L."/>
            <person name="Chorev D.S."/>
            <person name="Ionescu S.A."/>
            <person name="Lambert S."/>
            <person name="Stylianou F."/>
            <person name="Ewert W."/>
            <person name="Mackie U."/>
            <person name="Morgan R.M.L."/>
            <person name="Otzen D."/>
            <person name="Herbst F.A."/>
            <person name="Nielsen P.H."/>
            <person name="Dueholm M."/>
            <person name="Bayley H."/>
            <person name="Robinson C.V."/>
            <person name="Hare S."/>
            <person name="Matthews S."/>
        </authorList>
    </citation>
    <scope>PROTEIN SEQUENCE OF 19-34; 43-102; 104-111; 117-136; 147-162 AND 188-201</scope>
    <scope>FUNCTION</scope>
    <scope>SUBCELLULAR LOCATION</scope>
    <scope>DISRUPTION PHENOTYPE</scope>
    <scope>MUTAGENESIS OF CYS-56</scope>
    <source>
        <strain>DSM 29051 / UK4</strain>
    </source>
</reference>
<reference key="4">
    <citation type="journal article" date="2013" name="MicrobiologyOpen">
        <title>Expression of Fap amyloids in Pseudomonas aeruginosa, P. fluorescens, and P. putida results in aggregation and increased biofilm formation.</title>
        <authorList>
            <person name="Dueholm M.S."/>
            <person name="Soendergaard M.T."/>
            <person name="Nilsson M."/>
            <person name="Christiansen G."/>
            <person name="Stensballe A."/>
            <person name="Overgaard M.T."/>
            <person name="Givskov M."/>
            <person name="Tolker-Nielsen T."/>
            <person name="Otzen D.E."/>
            <person name="Nielsen P.H."/>
        </authorList>
    </citation>
    <scope>FUNCTION</scope>
    <scope>POSSIBLE SUBCELLULAR LOCATION</scope>
    <scope>DISRUPTION PHENOTYPE</scope>
    <source>
        <strain>DSM 29051 / UK4</strain>
    </source>
</reference>
<reference key="5">
    <citation type="journal article" date="2015" name="Front. Microbiol.">
        <title>Functional bacterial amyloid increases Pseudomonas biofilm hydrophobicity and stiffness.</title>
        <authorList>
            <person name="Zeng G."/>
            <person name="Vad B.S."/>
            <person name="Dueholm M.S."/>
            <person name="Christiansen G."/>
            <person name="Nilsson M."/>
            <person name="Tolker-Nielsen T."/>
            <person name="Nielsen P.H."/>
            <person name="Meyer R.L."/>
            <person name="Otzen D.E."/>
        </authorList>
    </citation>
    <scope>FUNCTION</scope>
    <scope>DISRUPTION PHENOTYPE</scope>
    <source>
        <strain>DSM 29051 / UK4</strain>
    </source>
</reference>
<evidence type="ECO:0000255" key="1"/>
<evidence type="ECO:0000255" key="2">
    <source>
        <dbReference type="PROSITE-ProRule" id="PRU00362"/>
    </source>
</evidence>
<evidence type="ECO:0000269" key="3">
    <source>
    </source>
</evidence>
<evidence type="ECO:0000269" key="4">
    <source>
    </source>
</evidence>
<evidence type="ECO:0000269" key="5">
    <source>
    </source>
</evidence>
<evidence type="ECO:0000269" key="6">
    <source>
    </source>
</evidence>
<evidence type="ECO:0000303" key="7">
    <source>
    </source>
</evidence>
<evidence type="ECO:0000303" key="8">
    <source>
    </source>
</evidence>
<evidence type="ECO:0000305" key="9"/>
<evidence type="ECO:0000305" key="10">
    <source>
    </source>
</evidence>
<gene>
    <name evidence="7" type="primary">fapD</name>
    <name evidence="8" type="ORF">HZ99_04095</name>
    <name evidence="7" type="ORF">PSUK4_00040</name>
</gene>
<comment type="function">
    <text evidence="3 4 5 6 10">Probable cysteine protease that is involved in processing fibril precursors (PubMed:23504942, PubMed:28811582). Upon overexpression of the endogenous six-gene locus (fapA-fapF) in situ, cells form large clumps during liquid growth, make large amounts of biofilm and produce amyloid fibrils (PubMed:23504942, PubMed:26500638). Expression of the 6 gene operon in E.coli strain BL21(DE3) induces flocculation and biofilm formation with copious extracellular fibrils (PubMed:20572935, PubMed:28811582).</text>
</comment>
<comment type="subcellular location">
    <subcellularLocation>
        <location evidence="6 10">Periplasm</location>
    </subcellularLocation>
    <text evidence="6">Secreted through the inner membrane by the Sec pathway.</text>
</comment>
<comment type="disruption phenotype">
    <text evidence="4 5 6">Deletion of just fapD in an overexpressing strain yields cells without amyloid fibrils (PubMed:26500638, PubMed:28811582). Deletion of the entire fapA-fapF six-gene locus shows no visible growth phenotype (PubMed:23504942, PubMed:26500638).</text>
</comment>
<comment type="similarity">
    <text evidence="9">Belongs to the FapD family.</text>
</comment>
<comment type="sequence caution" evidence="9">
    <conflict type="erroneous initiation">
        <sequence resource="EMBL-CDS" id="EEP64552"/>
    </conflict>
    <text>Extended N-terminus.</text>
</comment>